<proteinExistence type="inferred from homology"/>
<feature type="chain" id="PRO_0000160394" description="ATP-dependent Clp protease ATP-binding subunit ClpX">
    <location>
        <begin position="1"/>
        <end position="425"/>
    </location>
</feature>
<feature type="domain" description="ClpX-type ZB" evidence="2">
    <location>
        <begin position="1"/>
        <end position="54"/>
    </location>
</feature>
<feature type="binding site" evidence="2">
    <location>
        <position position="13"/>
    </location>
    <ligand>
        <name>Zn(2+)</name>
        <dbReference type="ChEBI" id="CHEBI:29105"/>
    </ligand>
</feature>
<feature type="binding site" evidence="2">
    <location>
        <position position="16"/>
    </location>
    <ligand>
        <name>Zn(2+)</name>
        <dbReference type="ChEBI" id="CHEBI:29105"/>
    </ligand>
</feature>
<feature type="binding site" evidence="2">
    <location>
        <position position="35"/>
    </location>
    <ligand>
        <name>Zn(2+)</name>
        <dbReference type="ChEBI" id="CHEBI:29105"/>
    </ligand>
</feature>
<feature type="binding site" evidence="2">
    <location>
        <position position="38"/>
    </location>
    <ligand>
        <name>Zn(2+)</name>
        <dbReference type="ChEBI" id="CHEBI:29105"/>
    </ligand>
</feature>
<feature type="binding site" evidence="1">
    <location>
        <begin position="117"/>
        <end position="124"/>
    </location>
    <ligand>
        <name>ATP</name>
        <dbReference type="ChEBI" id="CHEBI:30616"/>
    </ligand>
</feature>
<reference key="1">
    <citation type="journal article" date="2002" name="Nucleic Acids Res.">
        <title>Genome sequence of Oceanobacillus iheyensis isolated from the Iheya Ridge and its unexpected adaptive capabilities to extreme environments.</title>
        <authorList>
            <person name="Takami H."/>
            <person name="Takaki Y."/>
            <person name="Uchiyama I."/>
        </authorList>
    </citation>
    <scope>NUCLEOTIDE SEQUENCE [LARGE SCALE GENOMIC DNA]</scope>
    <source>
        <strain>DSM 14371 / CIP 107618 / JCM 11309 / KCTC 3954 / HTE831</strain>
    </source>
</reference>
<accession>Q8CXB8</accession>
<sequence length="425" mass="47029">MFKFNEEKGQLKCSFCGKSQEQVRKLVAGPGVYICDECIDLCTEIVEEELGTEEDMEMNEIPKPKEICDILDDYVIGQDKAKKNLSVAVYNHYKRVNSGKGNDEVEIAKSNIAMIGPTGSGKTLLAQTLARIINVPFAMADATSLTEAGYVGEDVENILLKLIQAADYDVEKAEKGIIYIDEIDKVARKSENPSITRDVSGEGVQQALLKILEGTVASVPPQGGRKHPHQEFIQIDTTNILFIVGGAFDGIDQVIKRRLGKKVIGFGSHEKQEDLDTGQLLSKVLPEDLLRYGLIPEFIGRIPVIGSLTPLDEEALIEILTKPKNALVKQYQKLFEIDHVELEFEEEALQEIAKKAIERKTGARGLRSIIEGIIVDVMFDIPSREDVDRCIITKETVSDDDGSPKLVFRDGTVKLGNEKLPKESA</sequence>
<comment type="function">
    <text evidence="1">ATP-dependent specificity component of the Clp protease. It directs the protease to specific substrates. Can perform chaperone functions in the absence of ClpP.</text>
</comment>
<comment type="subunit">
    <text evidence="1">Component of the ClpX-ClpP complex. Forms a hexameric ring that, in the presence of ATP, binds to fourteen ClpP subunits assembled into a disk-like structure with a central cavity, resembling the structure of eukaryotic proteasomes.</text>
</comment>
<comment type="similarity">
    <text evidence="1">Belongs to the ClpX chaperone family.</text>
</comment>
<gene>
    <name evidence="1" type="primary">clpX</name>
    <name type="ordered locus">OB2077</name>
</gene>
<keyword id="KW-0067">ATP-binding</keyword>
<keyword id="KW-0143">Chaperone</keyword>
<keyword id="KW-0479">Metal-binding</keyword>
<keyword id="KW-0547">Nucleotide-binding</keyword>
<keyword id="KW-1185">Reference proteome</keyword>
<keyword id="KW-0862">Zinc</keyword>
<evidence type="ECO:0000255" key="1">
    <source>
        <dbReference type="HAMAP-Rule" id="MF_00175"/>
    </source>
</evidence>
<evidence type="ECO:0000255" key="2">
    <source>
        <dbReference type="PROSITE-ProRule" id="PRU01250"/>
    </source>
</evidence>
<organism>
    <name type="scientific">Oceanobacillus iheyensis (strain DSM 14371 / CIP 107618 / JCM 11309 / KCTC 3954 / HTE831)</name>
    <dbReference type="NCBI Taxonomy" id="221109"/>
    <lineage>
        <taxon>Bacteria</taxon>
        <taxon>Bacillati</taxon>
        <taxon>Bacillota</taxon>
        <taxon>Bacilli</taxon>
        <taxon>Bacillales</taxon>
        <taxon>Bacillaceae</taxon>
        <taxon>Oceanobacillus</taxon>
    </lineage>
</organism>
<name>CLPX_OCEIH</name>
<dbReference type="EMBL" id="BA000028">
    <property type="protein sequence ID" value="BAC14033.1"/>
    <property type="molecule type" value="Genomic_DNA"/>
</dbReference>
<dbReference type="RefSeq" id="WP_011066472.1">
    <property type="nucleotide sequence ID" value="NC_004193.1"/>
</dbReference>
<dbReference type="SMR" id="Q8CXB8"/>
<dbReference type="STRING" id="221109.gene:10734323"/>
<dbReference type="KEGG" id="oih:OB2077"/>
<dbReference type="eggNOG" id="COG1219">
    <property type="taxonomic scope" value="Bacteria"/>
</dbReference>
<dbReference type="HOGENOM" id="CLU_014218_8_2_9"/>
<dbReference type="OrthoDB" id="9804062at2"/>
<dbReference type="PhylomeDB" id="Q8CXB8"/>
<dbReference type="Proteomes" id="UP000000822">
    <property type="component" value="Chromosome"/>
</dbReference>
<dbReference type="GO" id="GO:0009376">
    <property type="term" value="C:HslUV protease complex"/>
    <property type="evidence" value="ECO:0007669"/>
    <property type="project" value="TreeGrafter"/>
</dbReference>
<dbReference type="GO" id="GO:0005524">
    <property type="term" value="F:ATP binding"/>
    <property type="evidence" value="ECO:0007669"/>
    <property type="project" value="UniProtKB-UniRule"/>
</dbReference>
<dbReference type="GO" id="GO:0016887">
    <property type="term" value="F:ATP hydrolysis activity"/>
    <property type="evidence" value="ECO:0007669"/>
    <property type="project" value="InterPro"/>
</dbReference>
<dbReference type="GO" id="GO:0140662">
    <property type="term" value="F:ATP-dependent protein folding chaperone"/>
    <property type="evidence" value="ECO:0007669"/>
    <property type="project" value="InterPro"/>
</dbReference>
<dbReference type="GO" id="GO:0046983">
    <property type="term" value="F:protein dimerization activity"/>
    <property type="evidence" value="ECO:0007669"/>
    <property type="project" value="InterPro"/>
</dbReference>
<dbReference type="GO" id="GO:0051082">
    <property type="term" value="F:unfolded protein binding"/>
    <property type="evidence" value="ECO:0007669"/>
    <property type="project" value="UniProtKB-UniRule"/>
</dbReference>
<dbReference type="GO" id="GO:0008270">
    <property type="term" value="F:zinc ion binding"/>
    <property type="evidence" value="ECO:0007669"/>
    <property type="project" value="InterPro"/>
</dbReference>
<dbReference type="GO" id="GO:0051301">
    <property type="term" value="P:cell division"/>
    <property type="evidence" value="ECO:0007669"/>
    <property type="project" value="TreeGrafter"/>
</dbReference>
<dbReference type="GO" id="GO:0051603">
    <property type="term" value="P:proteolysis involved in protein catabolic process"/>
    <property type="evidence" value="ECO:0007669"/>
    <property type="project" value="TreeGrafter"/>
</dbReference>
<dbReference type="CDD" id="cd19497">
    <property type="entry name" value="RecA-like_ClpX"/>
    <property type="match status" value="1"/>
</dbReference>
<dbReference type="FunFam" id="1.10.8.60:FF:000002">
    <property type="entry name" value="ATP-dependent Clp protease ATP-binding subunit ClpX"/>
    <property type="match status" value="1"/>
</dbReference>
<dbReference type="FunFam" id="3.40.50.300:FF:000005">
    <property type="entry name" value="ATP-dependent Clp protease ATP-binding subunit ClpX"/>
    <property type="match status" value="1"/>
</dbReference>
<dbReference type="Gene3D" id="1.10.8.60">
    <property type="match status" value="1"/>
</dbReference>
<dbReference type="Gene3D" id="6.20.220.10">
    <property type="entry name" value="ClpX chaperone, C4-type zinc finger domain"/>
    <property type="match status" value="1"/>
</dbReference>
<dbReference type="Gene3D" id="3.40.50.300">
    <property type="entry name" value="P-loop containing nucleotide triphosphate hydrolases"/>
    <property type="match status" value="1"/>
</dbReference>
<dbReference type="HAMAP" id="MF_00175">
    <property type="entry name" value="ClpX"/>
    <property type="match status" value="1"/>
</dbReference>
<dbReference type="InterPro" id="IPR003593">
    <property type="entry name" value="AAA+_ATPase"/>
</dbReference>
<dbReference type="InterPro" id="IPR050052">
    <property type="entry name" value="ATP-dep_Clp_protease_ClpX"/>
</dbReference>
<dbReference type="InterPro" id="IPR003959">
    <property type="entry name" value="ATPase_AAA_core"/>
</dbReference>
<dbReference type="InterPro" id="IPR019489">
    <property type="entry name" value="Clp_ATPase_C"/>
</dbReference>
<dbReference type="InterPro" id="IPR004487">
    <property type="entry name" value="Clp_protease_ATP-bd_su_ClpX"/>
</dbReference>
<dbReference type="InterPro" id="IPR046425">
    <property type="entry name" value="ClpX_bact"/>
</dbReference>
<dbReference type="InterPro" id="IPR027417">
    <property type="entry name" value="P-loop_NTPase"/>
</dbReference>
<dbReference type="InterPro" id="IPR010603">
    <property type="entry name" value="Znf_CppX_C4"/>
</dbReference>
<dbReference type="InterPro" id="IPR038366">
    <property type="entry name" value="Znf_CppX_C4_sf"/>
</dbReference>
<dbReference type="NCBIfam" id="TIGR00382">
    <property type="entry name" value="clpX"/>
    <property type="match status" value="1"/>
</dbReference>
<dbReference type="NCBIfam" id="NF003745">
    <property type="entry name" value="PRK05342.1"/>
    <property type="match status" value="1"/>
</dbReference>
<dbReference type="PANTHER" id="PTHR48102:SF7">
    <property type="entry name" value="ATP-DEPENDENT CLP PROTEASE ATP-BINDING SUBUNIT CLPX-LIKE, MITOCHONDRIAL"/>
    <property type="match status" value="1"/>
</dbReference>
<dbReference type="PANTHER" id="PTHR48102">
    <property type="entry name" value="ATP-DEPENDENT CLP PROTEASE ATP-BINDING SUBUNIT CLPX-LIKE, MITOCHONDRIAL-RELATED"/>
    <property type="match status" value="1"/>
</dbReference>
<dbReference type="Pfam" id="PF07724">
    <property type="entry name" value="AAA_2"/>
    <property type="match status" value="1"/>
</dbReference>
<dbReference type="Pfam" id="PF10431">
    <property type="entry name" value="ClpB_D2-small"/>
    <property type="match status" value="1"/>
</dbReference>
<dbReference type="Pfam" id="PF06689">
    <property type="entry name" value="zf-C4_ClpX"/>
    <property type="match status" value="1"/>
</dbReference>
<dbReference type="SMART" id="SM00382">
    <property type="entry name" value="AAA"/>
    <property type="match status" value="1"/>
</dbReference>
<dbReference type="SMART" id="SM01086">
    <property type="entry name" value="ClpB_D2-small"/>
    <property type="match status" value="1"/>
</dbReference>
<dbReference type="SMART" id="SM00994">
    <property type="entry name" value="zf-C4_ClpX"/>
    <property type="match status" value="1"/>
</dbReference>
<dbReference type="SUPFAM" id="SSF57716">
    <property type="entry name" value="Glucocorticoid receptor-like (DNA-binding domain)"/>
    <property type="match status" value="1"/>
</dbReference>
<dbReference type="SUPFAM" id="SSF52540">
    <property type="entry name" value="P-loop containing nucleoside triphosphate hydrolases"/>
    <property type="match status" value="1"/>
</dbReference>
<dbReference type="PROSITE" id="PS51902">
    <property type="entry name" value="CLPX_ZB"/>
    <property type="match status" value="1"/>
</dbReference>
<protein>
    <recommendedName>
        <fullName evidence="1">ATP-dependent Clp protease ATP-binding subunit ClpX</fullName>
    </recommendedName>
</protein>